<comment type="function">
    <text evidence="1">Cleaved by the protease thrombin to yield monomers which, together with fibrinogen beta (FGB) and fibrinogen gamma (FGG), polymerize to form an insoluble fibrin matrix. Fibrin has a major function in hemostasis as one of the primary components of blood clots. In addition, functions during the early stages of wound repair to stabilize the lesion and guide cell migration during re-epithelialization. Was originally thought to be essential for platelet aggregation, based on in vitro studies using anticoagulated blood. However subsequent studies have shown that it is not absolutely required for thrombus formation in vivo. Enhances expression of SELP in activated platelets via an ITGB3-dependent pathway. Maternal fibrinogen is essential for successful pregnancy. Fibrin deposition is also associated with infection, where it protects against IFNG-mediated hemorrhage. May also facilitate the immune response via both innate and T-cell mediated pathways.</text>
</comment>
<comment type="subunit">
    <text evidence="2">Heterohexamer; disulfide linked. Contains 2 sets of 3 non-identical chains (alpha, beta and gamma). The 2 heterotrimers are in head to head conformation with the N-termini in a small central domain (By similarity).</text>
</comment>
<comment type="subcellular location">
    <subcellularLocation>
        <location>Secreted</location>
    </subcellularLocation>
</comment>
<comment type="domain">
    <text evidence="2">A long coiled coil structure formed by 3 polypeptide chains connects the central nodule to the C-terminal domains (distal nodules). The long C-terminal ends of the alpha chains fold back, contributing a fourth strand to the coiled coil structure.</text>
</comment>
<comment type="PTM">
    <text>Conversion of fibrinogen to fibrin is triggered by thrombin, which cleaves fibrinopeptides A and B from alpha and beta chains, and thus exposes the N-terminal polymerization sites responsible for the formation of the soft clot. The soft clot is converted into the hard clot by factor XIIIA which catalyzes the epsilon-(gamma-glutamyl)lysine cross-linking between gamma chains (stronger) and between alpha chains (weaker) of different monomers.</text>
</comment>
<comment type="PTM">
    <text>Forms F13A-mediated cross-links between a glutamine and the epsilon-amino group of a lysine residue, forming fibronectin-fibrinogen heteropolymers.</text>
</comment>
<proteinExistence type="evidence at protein level"/>
<organism>
    <name type="scientific">Alces alces alces</name>
    <name type="common">European moose</name>
    <name type="synonym">Elk</name>
    <dbReference type="NCBI Taxonomy" id="9853"/>
    <lineage>
        <taxon>Eukaryota</taxon>
        <taxon>Metazoa</taxon>
        <taxon>Chordata</taxon>
        <taxon>Craniata</taxon>
        <taxon>Vertebrata</taxon>
        <taxon>Euteleostomi</taxon>
        <taxon>Mammalia</taxon>
        <taxon>Eutheria</taxon>
        <taxon>Laurasiatheria</taxon>
        <taxon>Artiodactyla</taxon>
        <taxon>Ruminantia</taxon>
        <taxon>Pecora</taxon>
        <taxon>Cervidae</taxon>
        <taxon>Odocoileinae</taxon>
        <taxon>Alces</taxon>
    </lineage>
</organism>
<protein>
    <recommendedName>
        <fullName>Fibrinogen alpha chain</fullName>
    </recommendedName>
    <component>
        <recommendedName>
            <fullName>Fibrinopeptide A</fullName>
        </recommendedName>
    </component>
</protein>
<keyword id="KW-1064">Adaptive immunity</keyword>
<keyword id="KW-0094">Blood coagulation</keyword>
<keyword id="KW-0175">Coiled coil</keyword>
<keyword id="KW-0903">Direct protein sequencing</keyword>
<keyword id="KW-1015">Disulfide bond</keyword>
<keyword id="KW-0356">Hemostasis</keyword>
<keyword id="KW-0391">Immunity</keyword>
<keyword id="KW-0399">Innate immunity</keyword>
<keyword id="KW-0964">Secreted</keyword>
<dbReference type="PIR" id="B29501">
    <property type="entry name" value="B29501"/>
</dbReference>
<dbReference type="GO" id="GO:0005576">
    <property type="term" value="C:extracellular region"/>
    <property type="evidence" value="ECO:0007669"/>
    <property type="project" value="UniProtKB-SubCell"/>
</dbReference>
<dbReference type="GO" id="GO:0002250">
    <property type="term" value="P:adaptive immune response"/>
    <property type="evidence" value="ECO:0007669"/>
    <property type="project" value="UniProtKB-KW"/>
</dbReference>
<dbReference type="GO" id="GO:0007596">
    <property type="term" value="P:blood coagulation"/>
    <property type="evidence" value="ECO:0007669"/>
    <property type="project" value="UniProtKB-KW"/>
</dbReference>
<dbReference type="GO" id="GO:0045087">
    <property type="term" value="P:innate immune response"/>
    <property type="evidence" value="ECO:0007669"/>
    <property type="project" value="UniProtKB-KW"/>
</dbReference>
<name>FIBA_ALCAA</name>
<accession>Q7M3I5</accession>
<reference evidence="3 4" key="1">
    <citation type="book" date="1968" name="Chemotaxonomy and serotaxonomy">
        <editorList>
            <person name="Hawkes J.G."/>
        </editorList>
        <authorList>
            <person name="Blombaeck B."/>
            <person name="Blombaeck M."/>
        </authorList>
    </citation>
    <scope>PROTEIN SEQUENCE</scope>
</reference>
<sequence>ADGSDPAGGEFLAEGGGVR</sequence>
<evidence type="ECO:0000250" key="1">
    <source>
        <dbReference type="UniProtKB" id="E9PV24"/>
    </source>
</evidence>
<evidence type="ECO:0000250" key="2">
    <source>
        <dbReference type="UniProtKB" id="P02671"/>
    </source>
</evidence>
<evidence type="ECO:0000305" key="3"/>
<evidence type="ECO:0000312" key="4">
    <source>
        <dbReference type="PIR" id="B29501"/>
    </source>
</evidence>
<gene>
    <name evidence="2" type="primary">FGA</name>
</gene>
<feature type="peptide" id="PRO_0000250605" description="Fibrinopeptide A">
    <location>
        <begin position="1"/>
        <end position="19"/>
    </location>
</feature>
<feature type="non-terminal residue" evidence="3">
    <location>
        <position position="19"/>
    </location>
</feature>